<proteinExistence type="inferred from homology"/>
<gene>
    <name evidence="1" type="primary">menH</name>
    <name type="ordered locus">ECH74115_3405</name>
</gene>
<keyword id="KW-0456">Lyase</keyword>
<keyword id="KW-0474">Menaquinone biosynthesis</keyword>
<reference key="1">
    <citation type="journal article" date="2011" name="Proc. Natl. Acad. Sci. U.S.A.">
        <title>Genomic anatomy of Escherichia coli O157:H7 outbreaks.</title>
        <authorList>
            <person name="Eppinger M."/>
            <person name="Mammel M.K."/>
            <person name="Leclerc J.E."/>
            <person name="Ravel J."/>
            <person name="Cebula T.A."/>
        </authorList>
    </citation>
    <scope>NUCLEOTIDE SEQUENCE [LARGE SCALE GENOMIC DNA]</scope>
    <source>
        <strain>EC4115 / EHEC</strain>
    </source>
</reference>
<sequence length="252" mass="27645">MILHAQAKHGKPGLPWLVFLHGFSGDCLEWQEVGEAFADYSRLYVDLPGHGGSAAISVDGFDDVTDLLRKTLVSYNILSFWLVGYSLGGRVAMMAACQGLAGLCGVVVEGGHPGLQNAEQRAERQRSDRQWAQRFRSEPLTAVFADWYQQPVFASLNDDQRRELVVLRSNNNGATLAAMLEATSLAVQPDLRANLSARTFAFYYLCGERDSKFRALAAELAADCHVIPRAGHNAHRENPAGVIASLAQILRF</sequence>
<comment type="function">
    <text evidence="1">Catalyzes a proton abstraction reaction that results in 2,5-elimination of pyruvate from 2-succinyl-5-enolpyruvyl-6-hydroxy-3-cyclohexene-1-carboxylate (SEPHCHC) and the formation of 2-succinyl-6-hydroxy-2,4-cyclohexadiene-1-carboxylate (SHCHC).</text>
</comment>
<comment type="catalytic activity">
    <reaction evidence="1">
        <text>5-enolpyruvoyl-6-hydroxy-2-succinyl-cyclohex-3-ene-1-carboxylate = (1R,6R)-6-hydroxy-2-succinyl-cyclohexa-2,4-diene-1-carboxylate + pyruvate</text>
        <dbReference type="Rhea" id="RHEA:25597"/>
        <dbReference type="ChEBI" id="CHEBI:15361"/>
        <dbReference type="ChEBI" id="CHEBI:58689"/>
        <dbReference type="ChEBI" id="CHEBI:58818"/>
        <dbReference type="EC" id="4.2.99.20"/>
    </reaction>
</comment>
<comment type="pathway">
    <text evidence="1">Quinol/quinone metabolism; 1,4-dihydroxy-2-naphthoate biosynthesis; 1,4-dihydroxy-2-naphthoate from chorismate: step 3/7.</text>
</comment>
<comment type="pathway">
    <text evidence="1">Quinol/quinone metabolism; menaquinone biosynthesis.</text>
</comment>
<comment type="subunit">
    <text evidence="1">Monomer.</text>
</comment>
<comment type="similarity">
    <text evidence="1">Belongs to the AB hydrolase superfamily. MenH family.</text>
</comment>
<name>MENH_ECO5E</name>
<protein>
    <recommendedName>
        <fullName evidence="1">2-succinyl-6-hydroxy-2,4-cyclohexadiene-1-carboxylate synthase</fullName>
        <shortName evidence="1">SHCHC synthase</shortName>
        <ecNumber evidence="1">4.2.99.20</ecNumber>
    </recommendedName>
</protein>
<feature type="chain" id="PRO_1000187106" description="2-succinyl-6-hydroxy-2,4-cyclohexadiene-1-carboxylate synthase">
    <location>
        <begin position="1"/>
        <end position="252"/>
    </location>
</feature>
<dbReference type="EC" id="4.2.99.20" evidence="1"/>
<dbReference type="EMBL" id="CP001164">
    <property type="protein sequence ID" value="ACI39456.1"/>
    <property type="molecule type" value="Genomic_DNA"/>
</dbReference>
<dbReference type="RefSeq" id="WP_000600543.1">
    <property type="nucleotide sequence ID" value="NC_011353.1"/>
</dbReference>
<dbReference type="SMR" id="B5YXQ7"/>
<dbReference type="ESTHER" id="ecoli-YFBB">
    <property type="family name" value="MenH_SHCHC"/>
</dbReference>
<dbReference type="MEROPS" id="S33.996"/>
<dbReference type="KEGG" id="ecf:ECH74115_3405"/>
<dbReference type="HOGENOM" id="CLU_020336_38_2_6"/>
<dbReference type="UniPathway" id="UPA00079"/>
<dbReference type="UniPathway" id="UPA01057">
    <property type="reaction ID" value="UER00900"/>
</dbReference>
<dbReference type="GO" id="GO:0070205">
    <property type="term" value="F:2-succinyl-6-hydroxy-2,4-cyclohexadiene-1-carboxylate synthase activity"/>
    <property type="evidence" value="ECO:0007669"/>
    <property type="project" value="UniProtKB-UniRule"/>
</dbReference>
<dbReference type="GO" id="GO:0009234">
    <property type="term" value="P:menaquinone biosynthetic process"/>
    <property type="evidence" value="ECO:0007669"/>
    <property type="project" value="UniProtKB-UniRule"/>
</dbReference>
<dbReference type="FunFam" id="3.40.50.1820:FF:000038">
    <property type="entry name" value="2-succinyl-6-hydroxy-2,4-cyclohexadiene-1-carboxylate synthase"/>
    <property type="match status" value="1"/>
</dbReference>
<dbReference type="Gene3D" id="3.40.50.1820">
    <property type="entry name" value="alpha/beta hydrolase"/>
    <property type="match status" value="1"/>
</dbReference>
<dbReference type="HAMAP" id="MF_01660">
    <property type="entry name" value="MenH"/>
    <property type="match status" value="1"/>
</dbReference>
<dbReference type="InterPro" id="IPR000073">
    <property type="entry name" value="AB_hydrolase_1"/>
</dbReference>
<dbReference type="InterPro" id="IPR029058">
    <property type="entry name" value="AB_hydrolase_fold"/>
</dbReference>
<dbReference type="InterPro" id="IPR022485">
    <property type="entry name" value="SHCHC_synthase_MenH"/>
</dbReference>
<dbReference type="NCBIfam" id="TIGR03695">
    <property type="entry name" value="menH_SHCHC"/>
    <property type="match status" value="1"/>
</dbReference>
<dbReference type="NCBIfam" id="NF008340">
    <property type="entry name" value="PRK11126.1"/>
    <property type="match status" value="1"/>
</dbReference>
<dbReference type="PANTHER" id="PTHR42916">
    <property type="entry name" value="2-SUCCINYL-5-ENOLPYRUVYL-6-HYDROXY-3-CYCLOHEXENE-1-CARBOXYLATE SYNTHASE"/>
    <property type="match status" value="1"/>
</dbReference>
<dbReference type="PANTHER" id="PTHR42916:SF1">
    <property type="entry name" value="PROTEIN PHYLLO, CHLOROPLASTIC"/>
    <property type="match status" value="1"/>
</dbReference>
<dbReference type="Pfam" id="PF12697">
    <property type="entry name" value="Abhydrolase_6"/>
    <property type="match status" value="1"/>
</dbReference>
<dbReference type="SUPFAM" id="SSF53474">
    <property type="entry name" value="alpha/beta-Hydrolases"/>
    <property type="match status" value="1"/>
</dbReference>
<organism>
    <name type="scientific">Escherichia coli O157:H7 (strain EC4115 / EHEC)</name>
    <dbReference type="NCBI Taxonomy" id="444450"/>
    <lineage>
        <taxon>Bacteria</taxon>
        <taxon>Pseudomonadati</taxon>
        <taxon>Pseudomonadota</taxon>
        <taxon>Gammaproteobacteria</taxon>
        <taxon>Enterobacterales</taxon>
        <taxon>Enterobacteriaceae</taxon>
        <taxon>Escherichia</taxon>
    </lineage>
</organism>
<evidence type="ECO:0000255" key="1">
    <source>
        <dbReference type="HAMAP-Rule" id="MF_01660"/>
    </source>
</evidence>
<accession>B5YXQ7</accession>